<accession>P21026</accession>
<sequence length="434" mass="49873">MGIKNLKSLLLENKSLTILDDNLYKVYNGIFVDTMSIYIAVANCVRNLEELTTVFIKYVNGWVKKGGHVTLFIDRGSIKIKQDVRDKRRKYSKLTKDRKMLELEKCTSEIQNVTGFMEEEIKAEMQLKIDKLTFQIYLSDSDNIKISLNEILTHFNNNENVTLFYCDERDAEFVMCLEAKTHFSTTGEWPLIISTDQDTMLFASTDNHPKMIKNLTQLFKFVPSAEDNYLAKLTALVNGCDFFPGLYGASITPNNLNKIQLFSDFTIDNIVTSLAIKNYYRKTNSTVDVRNIVTFINDYANLDDVYSYVPPCQCTVQEFIFSALDEKWNNFKSSYLETVPLPCQLMYALEPRKEIDVSEVKTLSSYIDFENTKSDIDVIKSISSIFGYSNENCNTIVFGIYKDNLLLSINNSFYFNDSLLITNTKSDNIINIGY</sequence>
<dbReference type="EC" id="3.1.-.-" evidence="2"/>
<dbReference type="EMBL" id="M35027">
    <property type="protein sequence ID" value="AAA48069.1"/>
    <property type="molecule type" value="Genomic_DNA"/>
</dbReference>
<dbReference type="PIR" id="A42512">
    <property type="entry name" value="A42512"/>
</dbReference>
<dbReference type="Proteomes" id="UP000008269">
    <property type="component" value="Segment"/>
</dbReference>
<dbReference type="GO" id="GO:0044423">
    <property type="term" value="C:virion component"/>
    <property type="evidence" value="ECO:0007669"/>
    <property type="project" value="UniProtKB-KW"/>
</dbReference>
<dbReference type="GO" id="GO:0046872">
    <property type="term" value="F:metal ion binding"/>
    <property type="evidence" value="ECO:0007669"/>
    <property type="project" value="UniProtKB-KW"/>
</dbReference>
<dbReference type="GO" id="GO:0004518">
    <property type="term" value="F:nuclease activity"/>
    <property type="evidence" value="ECO:0007669"/>
    <property type="project" value="UniProtKB-KW"/>
</dbReference>
<dbReference type="GO" id="GO:0006281">
    <property type="term" value="P:DNA repair"/>
    <property type="evidence" value="ECO:0007669"/>
    <property type="project" value="UniProtKB-KW"/>
</dbReference>
<dbReference type="CDD" id="cd18674">
    <property type="entry name" value="PIN_Pox_G5"/>
    <property type="match status" value="1"/>
</dbReference>
<dbReference type="InterPro" id="IPR007678">
    <property type="entry name" value="Poxvirus_G5"/>
</dbReference>
<dbReference type="Pfam" id="PF04599">
    <property type="entry name" value="Pox_G5"/>
    <property type="match status" value="1"/>
</dbReference>
<gene>
    <name type="primary">OPG089</name>
    <name type="ORF">G5R</name>
</gene>
<organism>
    <name type="scientific">Vaccinia virus (strain Copenhagen)</name>
    <name type="common">VACV</name>
    <dbReference type="NCBI Taxonomy" id="10249"/>
    <lineage>
        <taxon>Viruses</taxon>
        <taxon>Varidnaviria</taxon>
        <taxon>Bamfordvirae</taxon>
        <taxon>Nucleocytoviricota</taxon>
        <taxon>Pokkesviricetes</taxon>
        <taxon>Chitovirales</taxon>
        <taxon>Poxviridae</taxon>
        <taxon>Chordopoxvirinae</taxon>
        <taxon>Orthopoxvirus</taxon>
        <taxon>Vaccinia virus</taxon>
    </lineage>
</organism>
<reference key="1">
    <citation type="journal article" date="1990" name="Virology">
        <title>The complete DNA sequence of vaccinia virus.</title>
        <authorList>
            <person name="Goebel S.J."/>
            <person name="Johnson G.P."/>
            <person name="Perkus M.E."/>
            <person name="Davis S.W."/>
            <person name="Winslow J.P."/>
            <person name="Paoletti E."/>
        </authorList>
    </citation>
    <scope>NUCLEOTIDE SEQUENCE [LARGE SCALE GENOMIC DNA]</scope>
</reference>
<reference key="2">
    <citation type="journal article" date="1990" name="Virology">
        <title>Appendix to 'The complete DNA sequence of vaccinia virus'.</title>
        <authorList>
            <person name="Goebel S.J."/>
            <person name="Johnson G.P."/>
            <person name="Perkus M.E."/>
            <person name="Davis S.W."/>
            <person name="Winslow J.P."/>
            <person name="Paoletti E."/>
        </authorList>
    </citation>
    <scope>NUCLEOTIDE SEQUENCE [LARGE SCALE GENOMIC DNA]</scope>
</reference>
<name>PG089_VACCC</name>
<feature type="chain" id="PRO_0000099531" description="Putative nuclease OPG089">
    <location>
        <begin position="1"/>
        <end position="434"/>
    </location>
</feature>
<feature type="binding site" evidence="1">
    <location>
        <position position="33"/>
    </location>
    <ligand>
        <name>Mg(2+)</name>
        <dbReference type="ChEBI" id="CHEBI:18420"/>
        <label>1</label>
    </ligand>
</feature>
<feature type="binding site" evidence="1">
    <location>
        <position position="74"/>
    </location>
    <ligand>
        <name>Mg(2+)</name>
        <dbReference type="ChEBI" id="CHEBI:18420"/>
        <label>1</label>
    </ligand>
</feature>
<feature type="binding site" evidence="1">
    <location>
        <position position="168"/>
    </location>
    <ligand>
        <name>Mg(2+)</name>
        <dbReference type="ChEBI" id="CHEBI:18420"/>
        <label>1</label>
    </ligand>
</feature>
<feature type="binding site" evidence="1">
    <location>
        <position position="170"/>
    </location>
    <ligand>
        <name>Mg(2+)</name>
        <dbReference type="ChEBI" id="CHEBI:18420"/>
        <label>1</label>
    </ligand>
</feature>
<feature type="binding site" evidence="1">
    <location>
        <position position="196"/>
    </location>
    <ligand>
        <name>Mg(2+)</name>
        <dbReference type="ChEBI" id="CHEBI:18420"/>
        <label>2</label>
    </ligand>
</feature>
<feature type="binding site" evidence="1">
    <location>
        <position position="198"/>
    </location>
    <ligand>
        <name>Mg(2+)</name>
        <dbReference type="ChEBI" id="CHEBI:18420"/>
        <label>2</label>
    </ligand>
</feature>
<proteinExistence type="evidence at transcript level"/>
<evidence type="ECO:0000250" key="1"/>
<evidence type="ECO:0000250" key="2">
    <source>
        <dbReference type="UniProtKB" id="Q80HX0"/>
    </source>
</evidence>
<evidence type="ECO:0000305" key="3"/>
<comment type="function">
    <text evidence="2">Putative nuclease that seems to be required for double-strand break repair, homologous recombination, and production of full-length viral genomic DNA.</text>
</comment>
<comment type="cofactor">
    <cofactor evidence="2">
        <name>Mg(2+)</name>
        <dbReference type="ChEBI" id="CHEBI:18420"/>
    </cofactor>
    <text evidence="1">Binds 2 magnesium ions per subunit. They probably participate in the reaction catalyzed by the enzyme.</text>
</comment>
<comment type="subcellular location">
    <subcellularLocation>
        <location evidence="2">Virion</location>
    </subcellularLocation>
    <text evidence="2">Present in the virion core.</text>
</comment>
<comment type="induction">
    <text>Expressed in the early phase of the viral replicative cycle.</text>
</comment>
<comment type="similarity">
    <text evidence="3">Belongs to the XPG/RAD2 endonuclease family. FEN1 subfamily.</text>
</comment>
<protein>
    <recommendedName>
        <fullName>Putative nuclease OPG089</fullName>
        <ecNumber evidence="2">3.1.-.-</ecNumber>
    </recommendedName>
    <alternativeName>
        <fullName>Putative nuclease G5</fullName>
    </alternativeName>
</protein>
<organismHost>
    <name type="scientific">Homo sapiens</name>
    <name type="common">Human</name>
    <dbReference type="NCBI Taxonomy" id="9606"/>
</organismHost>
<keyword id="KW-0227">DNA damage</keyword>
<keyword id="KW-0234">DNA repair</keyword>
<keyword id="KW-0244">Early protein</keyword>
<keyword id="KW-0378">Hydrolase</keyword>
<keyword id="KW-0460">Magnesium</keyword>
<keyword id="KW-0479">Metal-binding</keyword>
<keyword id="KW-0540">Nuclease</keyword>
<keyword id="KW-1185">Reference proteome</keyword>
<keyword id="KW-0946">Virion</keyword>